<comment type="function">
    <text evidence="1">Catalyzes the reversible interconversion of serine and glycine with tetrahydrofolate (THF) serving as the one-carbon carrier. This reaction serves as the major source of one-carbon groups required for the biosynthesis of purines, thymidylate, methionine, and other important biomolecules. Also exhibits THF-independent aldolase activity toward beta-hydroxyamino acids, producing glycine and aldehydes, via a retro-aldol mechanism.</text>
</comment>
<comment type="catalytic activity">
    <reaction evidence="1">
        <text>(6R)-5,10-methylene-5,6,7,8-tetrahydrofolate + glycine + H2O = (6S)-5,6,7,8-tetrahydrofolate + L-serine</text>
        <dbReference type="Rhea" id="RHEA:15481"/>
        <dbReference type="ChEBI" id="CHEBI:15377"/>
        <dbReference type="ChEBI" id="CHEBI:15636"/>
        <dbReference type="ChEBI" id="CHEBI:33384"/>
        <dbReference type="ChEBI" id="CHEBI:57305"/>
        <dbReference type="ChEBI" id="CHEBI:57453"/>
        <dbReference type="EC" id="2.1.2.1"/>
    </reaction>
</comment>
<comment type="cofactor">
    <cofactor evidence="1">
        <name>pyridoxal 5'-phosphate</name>
        <dbReference type="ChEBI" id="CHEBI:597326"/>
    </cofactor>
</comment>
<comment type="pathway">
    <text evidence="1">One-carbon metabolism; tetrahydrofolate interconversion.</text>
</comment>
<comment type="pathway">
    <text evidence="1">Amino-acid biosynthesis; glycine biosynthesis; glycine from L-serine: step 1/1.</text>
</comment>
<comment type="subunit">
    <text evidence="1">Homodimer.</text>
</comment>
<comment type="subcellular location">
    <subcellularLocation>
        <location evidence="1">Cytoplasm</location>
    </subcellularLocation>
</comment>
<comment type="similarity">
    <text evidence="1">Belongs to the SHMT family.</text>
</comment>
<evidence type="ECO:0000255" key="1">
    <source>
        <dbReference type="HAMAP-Rule" id="MF_00051"/>
    </source>
</evidence>
<dbReference type="EC" id="2.1.2.1" evidence="1"/>
<dbReference type="EMBL" id="AE013218">
    <property type="protein sequence ID" value="AAM67836.1"/>
    <property type="molecule type" value="Genomic_DNA"/>
</dbReference>
<dbReference type="RefSeq" id="WP_011053803.1">
    <property type="nucleotide sequence ID" value="NC_004061.1"/>
</dbReference>
<dbReference type="SMR" id="Q8K9P2"/>
<dbReference type="STRING" id="198804.BUsg_278"/>
<dbReference type="GeneID" id="93003748"/>
<dbReference type="KEGG" id="bas:BUsg_278"/>
<dbReference type="eggNOG" id="COG0112">
    <property type="taxonomic scope" value="Bacteria"/>
</dbReference>
<dbReference type="HOGENOM" id="CLU_022477_2_1_6"/>
<dbReference type="UniPathway" id="UPA00193"/>
<dbReference type="UniPathway" id="UPA00288">
    <property type="reaction ID" value="UER01023"/>
</dbReference>
<dbReference type="Proteomes" id="UP000000416">
    <property type="component" value="Chromosome"/>
</dbReference>
<dbReference type="GO" id="GO:0005829">
    <property type="term" value="C:cytosol"/>
    <property type="evidence" value="ECO:0007669"/>
    <property type="project" value="TreeGrafter"/>
</dbReference>
<dbReference type="GO" id="GO:0004372">
    <property type="term" value="F:glycine hydroxymethyltransferase activity"/>
    <property type="evidence" value="ECO:0007669"/>
    <property type="project" value="UniProtKB-UniRule"/>
</dbReference>
<dbReference type="GO" id="GO:0030170">
    <property type="term" value="F:pyridoxal phosphate binding"/>
    <property type="evidence" value="ECO:0007669"/>
    <property type="project" value="UniProtKB-UniRule"/>
</dbReference>
<dbReference type="GO" id="GO:0019264">
    <property type="term" value="P:glycine biosynthetic process from serine"/>
    <property type="evidence" value="ECO:0007669"/>
    <property type="project" value="UniProtKB-UniRule"/>
</dbReference>
<dbReference type="GO" id="GO:0035999">
    <property type="term" value="P:tetrahydrofolate interconversion"/>
    <property type="evidence" value="ECO:0007669"/>
    <property type="project" value="UniProtKB-UniRule"/>
</dbReference>
<dbReference type="CDD" id="cd00378">
    <property type="entry name" value="SHMT"/>
    <property type="match status" value="1"/>
</dbReference>
<dbReference type="FunFam" id="3.40.640.10:FF:000001">
    <property type="entry name" value="Serine hydroxymethyltransferase"/>
    <property type="match status" value="1"/>
</dbReference>
<dbReference type="FunFam" id="3.90.1150.10:FF:000003">
    <property type="entry name" value="Serine hydroxymethyltransferase"/>
    <property type="match status" value="1"/>
</dbReference>
<dbReference type="Gene3D" id="3.90.1150.10">
    <property type="entry name" value="Aspartate Aminotransferase, domain 1"/>
    <property type="match status" value="1"/>
</dbReference>
<dbReference type="Gene3D" id="3.40.640.10">
    <property type="entry name" value="Type I PLP-dependent aspartate aminotransferase-like (Major domain)"/>
    <property type="match status" value="1"/>
</dbReference>
<dbReference type="HAMAP" id="MF_00051">
    <property type="entry name" value="SHMT"/>
    <property type="match status" value="1"/>
</dbReference>
<dbReference type="InterPro" id="IPR015424">
    <property type="entry name" value="PyrdxlP-dep_Trfase"/>
</dbReference>
<dbReference type="InterPro" id="IPR015421">
    <property type="entry name" value="PyrdxlP-dep_Trfase_major"/>
</dbReference>
<dbReference type="InterPro" id="IPR015422">
    <property type="entry name" value="PyrdxlP-dep_Trfase_small"/>
</dbReference>
<dbReference type="InterPro" id="IPR001085">
    <property type="entry name" value="Ser_HO-MeTrfase"/>
</dbReference>
<dbReference type="InterPro" id="IPR049943">
    <property type="entry name" value="Ser_HO-MeTrfase-like"/>
</dbReference>
<dbReference type="InterPro" id="IPR019798">
    <property type="entry name" value="Ser_HO-MeTrfase_PLP_BS"/>
</dbReference>
<dbReference type="InterPro" id="IPR039429">
    <property type="entry name" value="SHMT-like_dom"/>
</dbReference>
<dbReference type="NCBIfam" id="NF000586">
    <property type="entry name" value="PRK00011.1"/>
    <property type="match status" value="1"/>
</dbReference>
<dbReference type="PANTHER" id="PTHR11680">
    <property type="entry name" value="SERINE HYDROXYMETHYLTRANSFERASE"/>
    <property type="match status" value="1"/>
</dbReference>
<dbReference type="PANTHER" id="PTHR11680:SF50">
    <property type="entry name" value="SERINE HYDROXYMETHYLTRANSFERASE"/>
    <property type="match status" value="1"/>
</dbReference>
<dbReference type="Pfam" id="PF00464">
    <property type="entry name" value="SHMT"/>
    <property type="match status" value="1"/>
</dbReference>
<dbReference type="PIRSF" id="PIRSF000412">
    <property type="entry name" value="SHMT"/>
    <property type="match status" value="1"/>
</dbReference>
<dbReference type="SUPFAM" id="SSF53383">
    <property type="entry name" value="PLP-dependent transferases"/>
    <property type="match status" value="1"/>
</dbReference>
<dbReference type="PROSITE" id="PS00096">
    <property type="entry name" value="SHMT"/>
    <property type="match status" value="1"/>
</dbReference>
<sequence>MFNTKIEFSKYDPELWKAIDQEKNRQENHIELIASENYTSNYVMHVQGSQLTNKYAEGYPEKRYYGGCKYVDIIEKLAINRAKKLFNADYANVQPHSGSQANFAVYTALLNPGDTILGMKLSHGGHLTHGSSVNFSGKTYNVIGYGVDKKGNIDYQEILTLAKKYKPKMIIGGFSAYSGICNWSKMRDIADEINAYFVVDIAHVAGLIAANLYPNPIDYAHVVTSTTHKTLAGPRGGLILAKNGTNTFYKKINLSVFPGAQGGPLMHVIAAKAIAFKEALEPAFKIYQKQVIKNAQVMVQSFLKKDYQIVSGNTFNHLFLLDLTSKNITGQEADIALGKCNITVNKNTIPNDLRSPFITSGIRIGTPAVTKRGFKENEMLQISDWIVHILNNIKDKNSLLGIKNEVLKLCSKYPVYI</sequence>
<keyword id="KW-0028">Amino-acid biosynthesis</keyword>
<keyword id="KW-0963">Cytoplasm</keyword>
<keyword id="KW-0554">One-carbon metabolism</keyword>
<keyword id="KW-0663">Pyridoxal phosphate</keyword>
<keyword id="KW-0808">Transferase</keyword>
<reference key="1">
    <citation type="journal article" date="2002" name="Science">
        <title>50 million years of genomic stasis in endosymbiotic bacteria.</title>
        <authorList>
            <person name="Tamas I."/>
            <person name="Klasson L."/>
            <person name="Canbaeck B."/>
            <person name="Naeslund A.K."/>
            <person name="Eriksson A.-S."/>
            <person name="Wernegreen J.J."/>
            <person name="Sandstroem J.P."/>
            <person name="Moran N.A."/>
            <person name="Andersson S.G.E."/>
        </authorList>
    </citation>
    <scope>NUCLEOTIDE SEQUENCE [LARGE SCALE GENOMIC DNA]</scope>
    <source>
        <strain>Sg</strain>
    </source>
</reference>
<organism>
    <name type="scientific">Buchnera aphidicola subsp. Schizaphis graminum (strain Sg)</name>
    <dbReference type="NCBI Taxonomy" id="198804"/>
    <lineage>
        <taxon>Bacteria</taxon>
        <taxon>Pseudomonadati</taxon>
        <taxon>Pseudomonadota</taxon>
        <taxon>Gammaproteobacteria</taxon>
        <taxon>Enterobacterales</taxon>
        <taxon>Erwiniaceae</taxon>
        <taxon>Buchnera</taxon>
    </lineage>
</organism>
<gene>
    <name evidence="1" type="primary">glyA</name>
    <name type="ordered locus">BUsg_278</name>
</gene>
<accession>Q8K9P2</accession>
<feature type="chain" id="PRO_0000113548" description="Serine hydroxymethyltransferase">
    <location>
        <begin position="1"/>
        <end position="417"/>
    </location>
</feature>
<feature type="binding site" evidence="1">
    <location>
        <position position="121"/>
    </location>
    <ligand>
        <name>(6S)-5,6,7,8-tetrahydrofolate</name>
        <dbReference type="ChEBI" id="CHEBI:57453"/>
    </ligand>
</feature>
<feature type="binding site" evidence="1">
    <location>
        <begin position="125"/>
        <end position="127"/>
    </location>
    <ligand>
        <name>(6S)-5,6,7,8-tetrahydrofolate</name>
        <dbReference type="ChEBI" id="CHEBI:57453"/>
    </ligand>
</feature>
<feature type="binding site" evidence="1">
    <location>
        <begin position="355"/>
        <end position="357"/>
    </location>
    <ligand>
        <name>(6S)-5,6,7,8-tetrahydrofolate</name>
        <dbReference type="ChEBI" id="CHEBI:57453"/>
    </ligand>
</feature>
<feature type="site" description="Plays an important role in substrate specificity" evidence="1">
    <location>
        <position position="228"/>
    </location>
</feature>
<feature type="modified residue" description="N6-(pyridoxal phosphate)lysine" evidence="1">
    <location>
        <position position="229"/>
    </location>
</feature>
<proteinExistence type="inferred from homology"/>
<protein>
    <recommendedName>
        <fullName evidence="1">Serine hydroxymethyltransferase</fullName>
        <shortName evidence="1">SHMT</shortName>
        <shortName evidence="1">Serine methylase</shortName>
        <ecNumber evidence="1">2.1.2.1</ecNumber>
    </recommendedName>
</protein>
<name>GLYA_BUCAP</name>